<dbReference type="EMBL" id="CP000686">
    <property type="protein sequence ID" value="ABQ88954.1"/>
    <property type="molecule type" value="Genomic_DNA"/>
</dbReference>
<dbReference type="RefSeq" id="WP_011955311.1">
    <property type="nucleotide sequence ID" value="NC_009523.1"/>
</dbReference>
<dbReference type="SMR" id="A5UQQ1"/>
<dbReference type="STRING" id="357808.RoseRS_0530"/>
<dbReference type="KEGG" id="rrs:RoseRS_0530"/>
<dbReference type="eggNOG" id="COG1666">
    <property type="taxonomic scope" value="Bacteria"/>
</dbReference>
<dbReference type="HOGENOM" id="CLU_099839_0_0_0"/>
<dbReference type="OrthoDB" id="9801447at2"/>
<dbReference type="Proteomes" id="UP000006554">
    <property type="component" value="Chromosome"/>
</dbReference>
<dbReference type="GO" id="GO:0005829">
    <property type="term" value="C:cytosol"/>
    <property type="evidence" value="ECO:0007669"/>
    <property type="project" value="TreeGrafter"/>
</dbReference>
<dbReference type="GO" id="GO:0000166">
    <property type="term" value="F:nucleotide binding"/>
    <property type="evidence" value="ECO:0007669"/>
    <property type="project" value="TreeGrafter"/>
</dbReference>
<dbReference type="CDD" id="cd11740">
    <property type="entry name" value="YajQ_like"/>
    <property type="match status" value="1"/>
</dbReference>
<dbReference type="Gene3D" id="3.30.70.860">
    <property type="match status" value="1"/>
</dbReference>
<dbReference type="Gene3D" id="3.30.70.990">
    <property type="entry name" value="YajQ-like, domain 2"/>
    <property type="match status" value="1"/>
</dbReference>
<dbReference type="HAMAP" id="MF_00632">
    <property type="entry name" value="YajQ"/>
    <property type="match status" value="1"/>
</dbReference>
<dbReference type="InterPro" id="IPR007551">
    <property type="entry name" value="DUF520"/>
</dbReference>
<dbReference type="InterPro" id="IPR035571">
    <property type="entry name" value="UPF0234-like_C"/>
</dbReference>
<dbReference type="InterPro" id="IPR035570">
    <property type="entry name" value="UPF0234_N"/>
</dbReference>
<dbReference type="InterPro" id="IPR036183">
    <property type="entry name" value="YajQ-like_sf"/>
</dbReference>
<dbReference type="NCBIfam" id="NF003819">
    <property type="entry name" value="PRK05412.1"/>
    <property type="match status" value="1"/>
</dbReference>
<dbReference type="PANTHER" id="PTHR30476">
    <property type="entry name" value="UPF0234 PROTEIN YAJQ"/>
    <property type="match status" value="1"/>
</dbReference>
<dbReference type="PANTHER" id="PTHR30476:SF0">
    <property type="entry name" value="UPF0234 PROTEIN YAJQ"/>
    <property type="match status" value="1"/>
</dbReference>
<dbReference type="Pfam" id="PF04461">
    <property type="entry name" value="DUF520"/>
    <property type="match status" value="1"/>
</dbReference>
<dbReference type="SUPFAM" id="SSF89963">
    <property type="entry name" value="YajQ-like"/>
    <property type="match status" value="2"/>
</dbReference>
<accession>A5UQQ1</accession>
<feature type="chain" id="PRO_1000147323" description="Nucleotide-binding protein RoseRS_0530">
    <location>
        <begin position="1"/>
        <end position="165"/>
    </location>
</feature>
<comment type="function">
    <text evidence="1">Nucleotide-binding protein.</text>
</comment>
<comment type="similarity">
    <text evidence="1">Belongs to the YajQ family.</text>
</comment>
<protein>
    <recommendedName>
        <fullName evidence="1">Nucleotide-binding protein RoseRS_0530</fullName>
    </recommendedName>
</protein>
<organism>
    <name type="scientific">Roseiflexus sp. (strain RS-1)</name>
    <dbReference type="NCBI Taxonomy" id="357808"/>
    <lineage>
        <taxon>Bacteria</taxon>
        <taxon>Bacillati</taxon>
        <taxon>Chloroflexota</taxon>
        <taxon>Chloroflexia</taxon>
        <taxon>Chloroflexales</taxon>
        <taxon>Roseiflexineae</taxon>
        <taxon>Roseiflexaceae</taxon>
        <taxon>Roseiflexus</taxon>
    </lineage>
</organism>
<gene>
    <name type="ordered locus">RoseRS_0530</name>
</gene>
<keyword id="KW-0547">Nucleotide-binding</keyword>
<reference key="1">
    <citation type="submission" date="2007-04" db="EMBL/GenBank/DDBJ databases">
        <title>Complete sequence of Roseiflexus sp. RS-1.</title>
        <authorList>
            <consortium name="US DOE Joint Genome Institute"/>
            <person name="Copeland A."/>
            <person name="Lucas S."/>
            <person name="Lapidus A."/>
            <person name="Barry K."/>
            <person name="Detter J.C."/>
            <person name="Glavina del Rio T."/>
            <person name="Hammon N."/>
            <person name="Israni S."/>
            <person name="Dalin E."/>
            <person name="Tice H."/>
            <person name="Pitluck S."/>
            <person name="Chertkov O."/>
            <person name="Brettin T."/>
            <person name="Bruce D."/>
            <person name="Han C."/>
            <person name="Schmutz J."/>
            <person name="Larimer F."/>
            <person name="Land M."/>
            <person name="Hauser L."/>
            <person name="Kyrpides N."/>
            <person name="Mikhailova N."/>
            <person name="Bryant D.A."/>
            <person name="Richardson P."/>
        </authorList>
    </citation>
    <scope>NUCLEOTIDE SEQUENCE [LARGE SCALE GENOMIC DNA]</scope>
    <source>
        <strain>RS-1</strain>
    </source>
</reference>
<proteinExistence type="inferred from homology"/>
<sequence length="165" mass="19009">MPAESTFDIVSDFDRQELINAVDQARREVATRYDLKDTKTEIVLSEKELTITTESEMHLTAVRDLIQTRALRRNLSIKIFKFGPIQEVSGGRVRQVALLQRGIPEDVAKKLAKLIRDHFPKVQPRIQGDVLRVGSKSRDELQAVIRLVKEHQDEFAIPLQFTNYR</sequence>
<name>Y530_ROSS1</name>
<evidence type="ECO:0000255" key="1">
    <source>
        <dbReference type="HAMAP-Rule" id="MF_00632"/>
    </source>
</evidence>